<accession>Q1CK45</accession>
<accession>C4GRR1</accession>
<protein>
    <recommendedName>
        <fullName evidence="1">Phosphate import ATP-binding protein PstB 1</fullName>
        <ecNumber evidence="1">7.3.2.1</ecNumber>
    </recommendedName>
    <alternativeName>
        <fullName evidence="1">ABC phosphate transporter 1</fullName>
    </alternativeName>
    <alternativeName>
        <fullName evidence="1">Phosphate-transporting ATPase 1</fullName>
    </alternativeName>
</protein>
<proteinExistence type="inferred from homology"/>
<comment type="function">
    <text evidence="1">Part of the ABC transporter complex PstSACB involved in phosphate import. Responsible for energy coupling to the transport system.</text>
</comment>
<comment type="catalytic activity">
    <reaction evidence="1">
        <text>phosphate(out) + ATP + H2O = ADP + 2 phosphate(in) + H(+)</text>
        <dbReference type="Rhea" id="RHEA:24440"/>
        <dbReference type="ChEBI" id="CHEBI:15377"/>
        <dbReference type="ChEBI" id="CHEBI:15378"/>
        <dbReference type="ChEBI" id="CHEBI:30616"/>
        <dbReference type="ChEBI" id="CHEBI:43474"/>
        <dbReference type="ChEBI" id="CHEBI:456216"/>
        <dbReference type="EC" id="7.3.2.1"/>
    </reaction>
</comment>
<comment type="subunit">
    <text evidence="1">The complex is composed of two ATP-binding proteins (PstB), two transmembrane proteins (PstC and PstA) and a solute-binding protein (PstS).</text>
</comment>
<comment type="subcellular location">
    <subcellularLocation>
        <location evidence="1">Cell inner membrane</location>
        <topology evidence="1">Peripheral membrane protein</topology>
    </subcellularLocation>
</comment>
<comment type="similarity">
    <text evidence="1">Belongs to the ABC transporter superfamily. Phosphate importer (TC 3.A.1.7) family.</text>
</comment>
<reference key="1">
    <citation type="journal article" date="2006" name="J. Bacteriol.">
        <title>Complete genome sequence of Yersinia pestis strains Antiqua and Nepal516: evidence of gene reduction in an emerging pathogen.</title>
        <authorList>
            <person name="Chain P.S.G."/>
            <person name="Hu P."/>
            <person name="Malfatti S.A."/>
            <person name="Radnedge L."/>
            <person name="Larimer F."/>
            <person name="Vergez L.M."/>
            <person name="Worsham P."/>
            <person name="Chu M.C."/>
            <person name="Andersen G.L."/>
        </authorList>
    </citation>
    <scope>NUCLEOTIDE SEQUENCE [LARGE SCALE GENOMIC DNA]</scope>
    <source>
        <strain>Nepal516</strain>
    </source>
</reference>
<reference key="2">
    <citation type="submission" date="2009-04" db="EMBL/GenBank/DDBJ databases">
        <title>Yersinia pestis Nepal516A whole genome shotgun sequencing project.</title>
        <authorList>
            <person name="Plunkett G. III"/>
            <person name="Anderson B.D."/>
            <person name="Baumler D.J."/>
            <person name="Burland V."/>
            <person name="Cabot E.L."/>
            <person name="Glasner J.D."/>
            <person name="Mau B."/>
            <person name="Neeno-Eckwall E."/>
            <person name="Perna N.T."/>
            <person name="Munk A.C."/>
            <person name="Tapia R."/>
            <person name="Green L.D."/>
            <person name="Rogers Y.C."/>
            <person name="Detter J.C."/>
            <person name="Bruce D.C."/>
            <person name="Brettin T.S."/>
        </authorList>
    </citation>
    <scope>NUCLEOTIDE SEQUENCE [LARGE SCALE GENOMIC DNA]</scope>
    <source>
        <strain>Nepal516</strain>
    </source>
</reference>
<feature type="chain" id="PRO_0000272580" description="Phosphate import ATP-binding protein PstB 1">
    <location>
        <begin position="1"/>
        <end position="270"/>
    </location>
</feature>
<feature type="domain" description="ABC transporter" evidence="1">
    <location>
        <begin position="24"/>
        <end position="265"/>
    </location>
</feature>
<feature type="binding site" evidence="1">
    <location>
        <begin position="56"/>
        <end position="63"/>
    </location>
    <ligand>
        <name>ATP</name>
        <dbReference type="ChEBI" id="CHEBI:30616"/>
    </ligand>
</feature>
<dbReference type="EC" id="7.3.2.1" evidence="1"/>
<dbReference type="EMBL" id="CP000305">
    <property type="protein sequence ID" value="ABG17635.1"/>
    <property type="molecule type" value="Genomic_DNA"/>
</dbReference>
<dbReference type="EMBL" id="ACNQ01000008">
    <property type="protein sequence ID" value="EEO77752.1"/>
    <property type="molecule type" value="Genomic_DNA"/>
</dbReference>
<dbReference type="SMR" id="Q1CK45"/>
<dbReference type="KEGG" id="ypn:YPN_1305"/>
<dbReference type="HOGENOM" id="CLU_000604_1_22_6"/>
<dbReference type="Proteomes" id="UP000008936">
    <property type="component" value="Chromosome"/>
</dbReference>
<dbReference type="GO" id="GO:0005886">
    <property type="term" value="C:plasma membrane"/>
    <property type="evidence" value="ECO:0007669"/>
    <property type="project" value="UniProtKB-SubCell"/>
</dbReference>
<dbReference type="GO" id="GO:0005524">
    <property type="term" value="F:ATP binding"/>
    <property type="evidence" value="ECO:0007669"/>
    <property type="project" value="UniProtKB-KW"/>
</dbReference>
<dbReference type="GO" id="GO:0016887">
    <property type="term" value="F:ATP hydrolysis activity"/>
    <property type="evidence" value="ECO:0007669"/>
    <property type="project" value="InterPro"/>
</dbReference>
<dbReference type="GO" id="GO:0015415">
    <property type="term" value="F:ATPase-coupled phosphate ion transmembrane transporter activity"/>
    <property type="evidence" value="ECO:0007669"/>
    <property type="project" value="UniProtKB-EC"/>
</dbReference>
<dbReference type="GO" id="GO:0035435">
    <property type="term" value="P:phosphate ion transmembrane transport"/>
    <property type="evidence" value="ECO:0007669"/>
    <property type="project" value="InterPro"/>
</dbReference>
<dbReference type="CDD" id="cd03260">
    <property type="entry name" value="ABC_PstB_phosphate_transporter"/>
    <property type="match status" value="1"/>
</dbReference>
<dbReference type="FunFam" id="3.40.50.300:FF:000132">
    <property type="entry name" value="Phosphate import ATP-binding protein PstB"/>
    <property type="match status" value="1"/>
</dbReference>
<dbReference type="Gene3D" id="3.40.50.300">
    <property type="entry name" value="P-loop containing nucleotide triphosphate hydrolases"/>
    <property type="match status" value="1"/>
</dbReference>
<dbReference type="InterPro" id="IPR003593">
    <property type="entry name" value="AAA+_ATPase"/>
</dbReference>
<dbReference type="InterPro" id="IPR003439">
    <property type="entry name" value="ABC_transporter-like_ATP-bd"/>
</dbReference>
<dbReference type="InterPro" id="IPR017871">
    <property type="entry name" value="ABC_transporter-like_CS"/>
</dbReference>
<dbReference type="InterPro" id="IPR027417">
    <property type="entry name" value="P-loop_NTPase"/>
</dbReference>
<dbReference type="InterPro" id="IPR005670">
    <property type="entry name" value="PstB-like"/>
</dbReference>
<dbReference type="NCBIfam" id="TIGR00972">
    <property type="entry name" value="3a0107s01c2"/>
    <property type="match status" value="1"/>
</dbReference>
<dbReference type="PANTHER" id="PTHR43423">
    <property type="entry name" value="ABC TRANSPORTER I FAMILY MEMBER 17"/>
    <property type="match status" value="1"/>
</dbReference>
<dbReference type="PANTHER" id="PTHR43423:SF12">
    <property type="entry name" value="IRON EXPORT ATP-BINDING PROTEIN FETA-RELATED"/>
    <property type="match status" value="1"/>
</dbReference>
<dbReference type="Pfam" id="PF00005">
    <property type="entry name" value="ABC_tran"/>
    <property type="match status" value="1"/>
</dbReference>
<dbReference type="SMART" id="SM00382">
    <property type="entry name" value="AAA"/>
    <property type="match status" value="1"/>
</dbReference>
<dbReference type="SUPFAM" id="SSF52540">
    <property type="entry name" value="P-loop containing nucleoside triphosphate hydrolases"/>
    <property type="match status" value="1"/>
</dbReference>
<dbReference type="PROSITE" id="PS00211">
    <property type="entry name" value="ABC_TRANSPORTER_1"/>
    <property type="match status" value="1"/>
</dbReference>
<dbReference type="PROSITE" id="PS50893">
    <property type="entry name" value="ABC_TRANSPORTER_2"/>
    <property type="match status" value="1"/>
</dbReference>
<dbReference type="PROSITE" id="PS51238">
    <property type="entry name" value="PSTB"/>
    <property type="match status" value="1"/>
</dbReference>
<keyword id="KW-0067">ATP-binding</keyword>
<keyword id="KW-0997">Cell inner membrane</keyword>
<keyword id="KW-1003">Cell membrane</keyword>
<keyword id="KW-0472">Membrane</keyword>
<keyword id="KW-0547">Nucleotide-binding</keyword>
<keyword id="KW-0592">Phosphate transport</keyword>
<keyword id="KW-1278">Translocase</keyword>
<keyword id="KW-0813">Transport</keyword>
<organism>
    <name type="scientific">Yersinia pestis bv. Antiqua (strain Nepal516)</name>
    <dbReference type="NCBI Taxonomy" id="377628"/>
    <lineage>
        <taxon>Bacteria</taxon>
        <taxon>Pseudomonadati</taxon>
        <taxon>Pseudomonadota</taxon>
        <taxon>Gammaproteobacteria</taxon>
        <taxon>Enterobacterales</taxon>
        <taxon>Yersiniaceae</taxon>
        <taxon>Yersinia</taxon>
    </lineage>
</organism>
<evidence type="ECO:0000255" key="1">
    <source>
        <dbReference type="HAMAP-Rule" id="MF_01702"/>
    </source>
</evidence>
<sequence>MGLLTPNSLPLLDVQHLTDEQTALAVERLNLFYGDKQVLHDISFCVPKHRVTALIGPSGCGKSTLLRCFNRMNDLLDNCHFDGEIRLGDEIITDKTTDVAALRRRVGMVFQRPNPFPKSIYENVVYGLRLQGVRDRRVLDEAVERSLRAAALWHEVKDRLRENAFRLSSGQQQRLVIARAIAIEPEVLLLDEPTSALDPISTLTIEELITTLKQQYTVVLVTHNMQQAARVSDYTAFIHQGRLVEYNNTDALFTSPYQRQTEDYITGRYG</sequence>
<gene>
    <name evidence="1" type="primary">pstB1</name>
    <name type="ordered locus">YPN_1305</name>
    <name type="ORF">YP516_1437</name>
</gene>
<name>PSTB1_YERPN</name>